<accession>Q3IFM6</accession>
<sequence>MSKNIYPVPTHIKNTALVDNDKYNKMYKHSIDDPQSFWAEHGKRLDWFTPYSKVKNTTFDKGHINIKWYEDGYLNASYNCIDRHLKTKANKVALIWEGDNPSQSEHITYQKLHDEVAKFANGLKKLGVQKGDRVAIYMPMSPQAIYAMQGCARIGAIHSVIFGGFSPSAIADRIKDSGAKVVITSDEGRRAGNCVPLKANVDEAVLQESVTSIEHVIVHQLTGGDVDWHDHDIWWHDLVADEEPVCEPEVMNAEDPLFILYTSGSTGQPKGVVHTTGGYLVYASMTHEYIFDVKEDDVFWCSADVGWITGHSYIAYGPLVNGCTQVVFEGVPTYPTAGRMGEVVDKHGVTILYTAPTAIRALMAKGDEPVASSHRNSLRILGSVGEPINPEAWNWYYEQIGKSNCPIVDTWWQTETGGIMITPLPGATDLKPGSATRPFFGIAPAIFDAEGNTLEGEADGNLVILDSWPSQARTIYGDHERFEQTYFSTYPGVYFCGDGCRRDEDGYYWITGRVDDVLNISGHRLGTAEIESALVAHPAVAEAAVVGYPHDIKGQGIYVYITPNEGITVSDELTKEIRNWVRKELSPIASPDMIQWSPGLPKTRSGKIMRRILRKIAANEHEQLGDTSTLADPSVVDELIENRLNR</sequence>
<comment type="function">
    <text evidence="1">Catalyzes the conversion of acetate into acetyl-CoA (AcCoA), an essential intermediate at the junction of anabolic and catabolic pathways. AcsA undergoes a two-step reaction. In the first half reaction, AcsA combines acetate with ATP to form acetyl-adenylate (AcAMP) intermediate. In the second half reaction, it can then transfer the acetyl group from AcAMP to the sulfhydryl group of CoA, forming the product AcCoA.</text>
</comment>
<comment type="catalytic activity">
    <reaction evidence="1">
        <text>acetate + ATP + CoA = acetyl-CoA + AMP + diphosphate</text>
        <dbReference type="Rhea" id="RHEA:23176"/>
        <dbReference type="ChEBI" id="CHEBI:30089"/>
        <dbReference type="ChEBI" id="CHEBI:30616"/>
        <dbReference type="ChEBI" id="CHEBI:33019"/>
        <dbReference type="ChEBI" id="CHEBI:57287"/>
        <dbReference type="ChEBI" id="CHEBI:57288"/>
        <dbReference type="ChEBI" id="CHEBI:456215"/>
        <dbReference type="EC" id="6.2.1.1"/>
    </reaction>
</comment>
<comment type="cofactor">
    <cofactor evidence="1">
        <name>Mg(2+)</name>
        <dbReference type="ChEBI" id="CHEBI:18420"/>
    </cofactor>
</comment>
<comment type="PTM">
    <text evidence="1">Acetylated. Deacetylation by the SIR2-homolog deacetylase activates the enzyme.</text>
</comment>
<comment type="similarity">
    <text evidence="1">Belongs to the ATP-dependent AMP-binding enzyme family.</text>
</comment>
<keyword id="KW-0007">Acetylation</keyword>
<keyword id="KW-0067">ATP-binding</keyword>
<keyword id="KW-0436">Ligase</keyword>
<keyword id="KW-0460">Magnesium</keyword>
<keyword id="KW-0479">Metal-binding</keyword>
<keyword id="KW-0547">Nucleotide-binding</keyword>
<keyword id="KW-1185">Reference proteome</keyword>
<name>ACSA_PSET1</name>
<feature type="chain" id="PRO_1000137271" description="Acetyl-coenzyme A synthetase">
    <location>
        <begin position="1"/>
        <end position="646"/>
    </location>
</feature>
<feature type="binding site" evidence="1">
    <location>
        <begin position="190"/>
        <end position="193"/>
    </location>
    <ligand>
        <name>CoA</name>
        <dbReference type="ChEBI" id="CHEBI:57287"/>
    </ligand>
</feature>
<feature type="binding site" evidence="1">
    <location>
        <position position="309"/>
    </location>
    <ligand>
        <name>CoA</name>
        <dbReference type="ChEBI" id="CHEBI:57287"/>
    </ligand>
</feature>
<feature type="binding site" evidence="1">
    <location>
        <begin position="385"/>
        <end position="387"/>
    </location>
    <ligand>
        <name>ATP</name>
        <dbReference type="ChEBI" id="CHEBI:30616"/>
    </ligand>
</feature>
<feature type="binding site" evidence="1">
    <location>
        <begin position="409"/>
        <end position="414"/>
    </location>
    <ligand>
        <name>ATP</name>
        <dbReference type="ChEBI" id="CHEBI:30616"/>
    </ligand>
</feature>
<feature type="binding site" evidence="1">
    <location>
        <position position="498"/>
    </location>
    <ligand>
        <name>ATP</name>
        <dbReference type="ChEBI" id="CHEBI:30616"/>
    </ligand>
</feature>
<feature type="binding site" evidence="1">
    <location>
        <position position="513"/>
    </location>
    <ligand>
        <name>ATP</name>
        <dbReference type="ChEBI" id="CHEBI:30616"/>
    </ligand>
</feature>
<feature type="binding site" evidence="1">
    <location>
        <position position="521"/>
    </location>
    <ligand>
        <name>CoA</name>
        <dbReference type="ChEBI" id="CHEBI:57287"/>
    </ligand>
</feature>
<feature type="binding site" evidence="1">
    <location>
        <position position="524"/>
    </location>
    <ligand>
        <name>ATP</name>
        <dbReference type="ChEBI" id="CHEBI:30616"/>
    </ligand>
</feature>
<feature type="binding site" evidence="1">
    <location>
        <position position="535"/>
    </location>
    <ligand>
        <name>Mg(2+)</name>
        <dbReference type="ChEBI" id="CHEBI:18420"/>
    </ligand>
</feature>
<feature type="binding site" evidence="1">
    <location>
        <position position="537"/>
    </location>
    <ligand>
        <name>Mg(2+)</name>
        <dbReference type="ChEBI" id="CHEBI:18420"/>
    </ligand>
</feature>
<feature type="binding site" evidence="1">
    <location>
        <position position="540"/>
    </location>
    <ligand>
        <name>Mg(2+)</name>
        <dbReference type="ChEBI" id="CHEBI:18420"/>
    </ligand>
</feature>
<feature type="binding site" evidence="1">
    <location>
        <position position="582"/>
    </location>
    <ligand>
        <name>CoA</name>
        <dbReference type="ChEBI" id="CHEBI:57287"/>
    </ligand>
</feature>
<feature type="modified residue" description="N6-acetyllysine" evidence="1">
    <location>
        <position position="607"/>
    </location>
</feature>
<reference key="1">
    <citation type="journal article" date="2005" name="Genome Res.">
        <title>Coping with cold: the genome of the versatile marine Antarctica bacterium Pseudoalteromonas haloplanktis TAC125.</title>
        <authorList>
            <person name="Medigue C."/>
            <person name="Krin E."/>
            <person name="Pascal G."/>
            <person name="Barbe V."/>
            <person name="Bernsel A."/>
            <person name="Bertin P.N."/>
            <person name="Cheung F."/>
            <person name="Cruveiller S."/>
            <person name="D'Amico S."/>
            <person name="Duilio A."/>
            <person name="Fang G."/>
            <person name="Feller G."/>
            <person name="Ho C."/>
            <person name="Mangenot S."/>
            <person name="Marino G."/>
            <person name="Nilsson J."/>
            <person name="Parrilli E."/>
            <person name="Rocha E.P.C."/>
            <person name="Rouy Z."/>
            <person name="Sekowska A."/>
            <person name="Tutino M.L."/>
            <person name="Vallenet D."/>
            <person name="von Heijne G."/>
            <person name="Danchin A."/>
        </authorList>
    </citation>
    <scope>NUCLEOTIDE SEQUENCE [LARGE SCALE GENOMIC DNA]</scope>
    <source>
        <strain>TAC 125</strain>
    </source>
</reference>
<dbReference type="EC" id="6.2.1.1" evidence="1"/>
<dbReference type="EMBL" id="CR954246">
    <property type="protein sequence ID" value="CAI85782.1"/>
    <property type="molecule type" value="Genomic_DNA"/>
</dbReference>
<dbReference type="SMR" id="Q3IFM6"/>
<dbReference type="STRING" id="326442.PSHAa0698"/>
<dbReference type="KEGG" id="pha:PSHAa0698"/>
<dbReference type="PATRIC" id="fig|326442.8.peg.660"/>
<dbReference type="eggNOG" id="COG0365">
    <property type="taxonomic scope" value="Bacteria"/>
</dbReference>
<dbReference type="HOGENOM" id="CLU_000022_3_6_6"/>
<dbReference type="BioCyc" id="PHAL326442:PSHA_RS03410-MONOMER"/>
<dbReference type="Proteomes" id="UP000006843">
    <property type="component" value="Chromosome I"/>
</dbReference>
<dbReference type="GO" id="GO:0005829">
    <property type="term" value="C:cytosol"/>
    <property type="evidence" value="ECO:0007669"/>
    <property type="project" value="TreeGrafter"/>
</dbReference>
<dbReference type="GO" id="GO:0003987">
    <property type="term" value="F:acetate-CoA ligase activity"/>
    <property type="evidence" value="ECO:0007669"/>
    <property type="project" value="UniProtKB-UniRule"/>
</dbReference>
<dbReference type="GO" id="GO:0016208">
    <property type="term" value="F:AMP binding"/>
    <property type="evidence" value="ECO:0007669"/>
    <property type="project" value="InterPro"/>
</dbReference>
<dbReference type="GO" id="GO:0005524">
    <property type="term" value="F:ATP binding"/>
    <property type="evidence" value="ECO:0007669"/>
    <property type="project" value="UniProtKB-KW"/>
</dbReference>
<dbReference type="GO" id="GO:0046872">
    <property type="term" value="F:metal ion binding"/>
    <property type="evidence" value="ECO:0007669"/>
    <property type="project" value="UniProtKB-KW"/>
</dbReference>
<dbReference type="GO" id="GO:0019427">
    <property type="term" value="P:acetyl-CoA biosynthetic process from acetate"/>
    <property type="evidence" value="ECO:0007669"/>
    <property type="project" value="InterPro"/>
</dbReference>
<dbReference type="CDD" id="cd05966">
    <property type="entry name" value="ACS"/>
    <property type="match status" value="1"/>
</dbReference>
<dbReference type="FunFam" id="3.30.300.30:FF:000004">
    <property type="entry name" value="Acetyl-coenzyme A synthetase"/>
    <property type="match status" value="1"/>
</dbReference>
<dbReference type="FunFam" id="3.40.50.12780:FF:000001">
    <property type="entry name" value="Acetyl-coenzyme A synthetase"/>
    <property type="match status" value="1"/>
</dbReference>
<dbReference type="Gene3D" id="3.30.300.30">
    <property type="match status" value="1"/>
</dbReference>
<dbReference type="Gene3D" id="3.40.50.12780">
    <property type="entry name" value="N-terminal domain of ligase-like"/>
    <property type="match status" value="1"/>
</dbReference>
<dbReference type="HAMAP" id="MF_01123">
    <property type="entry name" value="Ac_CoA_synth"/>
    <property type="match status" value="1"/>
</dbReference>
<dbReference type="InterPro" id="IPR011904">
    <property type="entry name" value="Ac_CoA_lig"/>
</dbReference>
<dbReference type="InterPro" id="IPR032387">
    <property type="entry name" value="ACAS_N"/>
</dbReference>
<dbReference type="InterPro" id="IPR025110">
    <property type="entry name" value="AMP-bd_C"/>
</dbReference>
<dbReference type="InterPro" id="IPR045851">
    <property type="entry name" value="AMP-bd_C_sf"/>
</dbReference>
<dbReference type="InterPro" id="IPR020845">
    <property type="entry name" value="AMP-binding_CS"/>
</dbReference>
<dbReference type="InterPro" id="IPR000873">
    <property type="entry name" value="AMP-dep_synth/lig_dom"/>
</dbReference>
<dbReference type="InterPro" id="IPR042099">
    <property type="entry name" value="ANL_N_sf"/>
</dbReference>
<dbReference type="NCBIfam" id="TIGR02188">
    <property type="entry name" value="Ac_CoA_lig_AcsA"/>
    <property type="match status" value="1"/>
</dbReference>
<dbReference type="NCBIfam" id="NF001208">
    <property type="entry name" value="PRK00174.1"/>
    <property type="match status" value="1"/>
</dbReference>
<dbReference type="PANTHER" id="PTHR24095">
    <property type="entry name" value="ACETYL-COENZYME A SYNTHETASE"/>
    <property type="match status" value="1"/>
</dbReference>
<dbReference type="PANTHER" id="PTHR24095:SF243">
    <property type="entry name" value="ACETYL-COENZYME A SYNTHETASE"/>
    <property type="match status" value="1"/>
</dbReference>
<dbReference type="Pfam" id="PF16177">
    <property type="entry name" value="ACAS_N"/>
    <property type="match status" value="1"/>
</dbReference>
<dbReference type="Pfam" id="PF00501">
    <property type="entry name" value="AMP-binding"/>
    <property type="match status" value="1"/>
</dbReference>
<dbReference type="Pfam" id="PF13193">
    <property type="entry name" value="AMP-binding_C"/>
    <property type="match status" value="1"/>
</dbReference>
<dbReference type="SUPFAM" id="SSF56801">
    <property type="entry name" value="Acetyl-CoA synthetase-like"/>
    <property type="match status" value="1"/>
</dbReference>
<dbReference type="PROSITE" id="PS00455">
    <property type="entry name" value="AMP_BINDING"/>
    <property type="match status" value="1"/>
</dbReference>
<organism>
    <name type="scientific">Pseudoalteromonas translucida (strain TAC 125)</name>
    <dbReference type="NCBI Taxonomy" id="326442"/>
    <lineage>
        <taxon>Bacteria</taxon>
        <taxon>Pseudomonadati</taxon>
        <taxon>Pseudomonadota</taxon>
        <taxon>Gammaproteobacteria</taxon>
        <taxon>Alteromonadales</taxon>
        <taxon>Pseudoalteromonadaceae</taxon>
        <taxon>Pseudoalteromonas</taxon>
    </lineage>
</organism>
<proteinExistence type="inferred from homology"/>
<gene>
    <name evidence="1" type="primary">acsA</name>
    <name type="ordered locus">PSHAa0698</name>
</gene>
<evidence type="ECO:0000255" key="1">
    <source>
        <dbReference type="HAMAP-Rule" id="MF_01123"/>
    </source>
</evidence>
<protein>
    <recommendedName>
        <fullName evidence="1">Acetyl-coenzyme A synthetase</fullName>
        <shortName evidence="1">AcCoA synthetase</shortName>
        <shortName evidence="1">Acs</shortName>
        <ecNumber evidence="1">6.2.1.1</ecNumber>
    </recommendedName>
    <alternativeName>
        <fullName evidence="1">Acetate--CoA ligase</fullName>
    </alternativeName>
    <alternativeName>
        <fullName evidence="1">Acyl-activating enzyme</fullName>
    </alternativeName>
</protein>